<protein>
    <recommendedName>
        <fullName evidence="1">Enolase</fullName>
        <ecNumber evidence="1">4.2.1.11</ecNumber>
    </recommendedName>
    <alternativeName>
        <fullName evidence="1">2-phospho-D-glycerate hydro-lyase</fullName>
    </alternativeName>
    <alternativeName>
        <fullName evidence="1">2-phosphoglycerate dehydratase</fullName>
    </alternativeName>
</protein>
<feature type="chain" id="PRO_1000059455" description="Enolase">
    <location>
        <begin position="1"/>
        <end position="426"/>
    </location>
</feature>
<feature type="active site" description="Proton donor" evidence="1">
    <location>
        <position position="204"/>
    </location>
</feature>
<feature type="active site" description="Proton acceptor" evidence="1">
    <location>
        <position position="338"/>
    </location>
</feature>
<feature type="binding site" evidence="1">
    <location>
        <position position="162"/>
    </location>
    <ligand>
        <name>(2R)-2-phosphoglycerate</name>
        <dbReference type="ChEBI" id="CHEBI:58289"/>
    </ligand>
</feature>
<feature type="binding site" evidence="1">
    <location>
        <position position="241"/>
    </location>
    <ligand>
        <name>Mg(2+)</name>
        <dbReference type="ChEBI" id="CHEBI:18420"/>
    </ligand>
</feature>
<feature type="binding site" evidence="1">
    <location>
        <position position="286"/>
    </location>
    <ligand>
        <name>Mg(2+)</name>
        <dbReference type="ChEBI" id="CHEBI:18420"/>
    </ligand>
</feature>
<feature type="binding site" evidence="1">
    <location>
        <position position="313"/>
    </location>
    <ligand>
        <name>Mg(2+)</name>
        <dbReference type="ChEBI" id="CHEBI:18420"/>
    </ligand>
</feature>
<feature type="binding site" evidence="1">
    <location>
        <position position="338"/>
    </location>
    <ligand>
        <name>(2R)-2-phosphoglycerate</name>
        <dbReference type="ChEBI" id="CHEBI:58289"/>
    </ligand>
</feature>
<feature type="binding site" evidence="1">
    <location>
        <position position="367"/>
    </location>
    <ligand>
        <name>(2R)-2-phosphoglycerate</name>
        <dbReference type="ChEBI" id="CHEBI:58289"/>
    </ligand>
</feature>
<feature type="binding site" evidence="1">
    <location>
        <position position="368"/>
    </location>
    <ligand>
        <name>(2R)-2-phosphoglycerate</name>
        <dbReference type="ChEBI" id="CHEBI:58289"/>
    </ligand>
</feature>
<feature type="binding site" evidence="1">
    <location>
        <position position="389"/>
    </location>
    <ligand>
        <name>(2R)-2-phosphoglycerate</name>
        <dbReference type="ChEBI" id="CHEBI:58289"/>
    </ligand>
</feature>
<evidence type="ECO:0000255" key="1">
    <source>
        <dbReference type="HAMAP-Rule" id="MF_00318"/>
    </source>
</evidence>
<keyword id="KW-0963">Cytoplasm</keyword>
<keyword id="KW-0324">Glycolysis</keyword>
<keyword id="KW-0456">Lyase</keyword>
<keyword id="KW-0460">Magnesium</keyword>
<keyword id="KW-0479">Metal-binding</keyword>
<keyword id="KW-1185">Reference proteome</keyword>
<keyword id="KW-0964">Secreted</keyword>
<gene>
    <name evidence="1" type="primary">eno</name>
    <name type="ordered locus">Abu_2240</name>
</gene>
<sequence length="426" mass="46067">MVFIDNIYADEVLDSRGNPTVRATVILSDGTKGSAIVPSGASTGKREALELRDGDNRFLGKGVLKAVENVNTKIADELIGLSPFNQAEVDATMKDIDGTHNYSNLGANAVLGVSMATARAAANSLQIPLYRYLGGANAMTMPVPMFNIINGGEHANNSVDFQEYMIMPTGFENFNDGLRAVAEIYQHLKKVIDFMGESTAVGDEGGFAPNLKSNEEPISVIMSAIEKAGYKAGEQISIALDVAASELIDEKTKKYVLKGENRELTSAELVDYYADLCSKYPIVSIEDGLSEDDWDGWKILTEKLGSKVQLVGDDLFVTNASIVAEGIKKGIANAVLIKPNQIGTVSETMQTIRLAQRNNYNCIMSHRSGESEDAFIADFAVALNCGQIKTGSTARSDRIAKYNRLLEIGAEIGYAEYLGKQPFSKK</sequence>
<comment type="function">
    <text evidence="1">Catalyzes the reversible conversion of 2-phosphoglycerate (2-PG) into phosphoenolpyruvate (PEP). It is essential for the degradation of carbohydrates via glycolysis.</text>
</comment>
<comment type="catalytic activity">
    <reaction evidence="1">
        <text>(2R)-2-phosphoglycerate = phosphoenolpyruvate + H2O</text>
        <dbReference type="Rhea" id="RHEA:10164"/>
        <dbReference type="ChEBI" id="CHEBI:15377"/>
        <dbReference type="ChEBI" id="CHEBI:58289"/>
        <dbReference type="ChEBI" id="CHEBI:58702"/>
        <dbReference type="EC" id="4.2.1.11"/>
    </reaction>
</comment>
<comment type="cofactor">
    <cofactor evidence="1">
        <name>Mg(2+)</name>
        <dbReference type="ChEBI" id="CHEBI:18420"/>
    </cofactor>
    <text evidence="1">Binds a second Mg(2+) ion via substrate during catalysis.</text>
</comment>
<comment type="pathway">
    <text evidence="1">Carbohydrate degradation; glycolysis; pyruvate from D-glyceraldehyde 3-phosphate: step 4/5.</text>
</comment>
<comment type="subcellular location">
    <subcellularLocation>
        <location evidence="1">Cytoplasm</location>
    </subcellularLocation>
    <subcellularLocation>
        <location evidence="1">Secreted</location>
    </subcellularLocation>
    <subcellularLocation>
        <location evidence="1">Cell surface</location>
    </subcellularLocation>
    <text evidence="1">Fractions of enolase are present in both the cytoplasm and on the cell surface.</text>
</comment>
<comment type="similarity">
    <text evidence="1">Belongs to the enolase family.</text>
</comment>
<accession>A8EWY0</accession>
<reference key="1">
    <citation type="journal article" date="2007" name="PLoS ONE">
        <title>The complete genome sequence and analysis of the Epsilonproteobacterium Arcobacter butzleri.</title>
        <authorList>
            <person name="Miller W.G."/>
            <person name="Parker C.T."/>
            <person name="Rubenfield M."/>
            <person name="Mendz G.L."/>
            <person name="Woesten M.M.S.M."/>
            <person name="Ussery D.W."/>
            <person name="Stolz J.F."/>
            <person name="Binnewies T.T."/>
            <person name="Hallin P.F."/>
            <person name="Wang G."/>
            <person name="Malek J.A."/>
            <person name="Rogosin A."/>
            <person name="Stanker L.H."/>
            <person name="Mandrell R.E."/>
        </authorList>
    </citation>
    <scope>NUCLEOTIDE SEQUENCE [LARGE SCALE GENOMIC DNA]</scope>
    <source>
        <strain>RM4018</strain>
    </source>
</reference>
<dbReference type="EC" id="4.2.1.11" evidence="1"/>
<dbReference type="EMBL" id="CP000361">
    <property type="protein sequence ID" value="ABV68453.1"/>
    <property type="molecule type" value="Genomic_DNA"/>
</dbReference>
<dbReference type="RefSeq" id="WP_012148084.1">
    <property type="nucleotide sequence ID" value="NC_009850.1"/>
</dbReference>
<dbReference type="SMR" id="A8EWY0"/>
<dbReference type="STRING" id="367737.Abu_2240"/>
<dbReference type="GeneID" id="24304739"/>
<dbReference type="KEGG" id="abu:Abu_2240"/>
<dbReference type="eggNOG" id="COG0148">
    <property type="taxonomic scope" value="Bacteria"/>
</dbReference>
<dbReference type="HOGENOM" id="CLU_031223_2_1_7"/>
<dbReference type="UniPathway" id="UPA00109">
    <property type="reaction ID" value="UER00187"/>
</dbReference>
<dbReference type="Proteomes" id="UP000001136">
    <property type="component" value="Chromosome"/>
</dbReference>
<dbReference type="GO" id="GO:0009986">
    <property type="term" value="C:cell surface"/>
    <property type="evidence" value="ECO:0007669"/>
    <property type="project" value="UniProtKB-SubCell"/>
</dbReference>
<dbReference type="GO" id="GO:0005576">
    <property type="term" value="C:extracellular region"/>
    <property type="evidence" value="ECO:0007669"/>
    <property type="project" value="UniProtKB-SubCell"/>
</dbReference>
<dbReference type="GO" id="GO:0000015">
    <property type="term" value="C:phosphopyruvate hydratase complex"/>
    <property type="evidence" value="ECO:0007669"/>
    <property type="project" value="InterPro"/>
</dbReference>
<dbReference type="GO" id="GO:0000287">
    <property type="term" value="F:magnesium ion binding"/>
    <property type="evidence" value="ECO:0007669"/>
    <property type="project" value="UniProtKB-UniRule"/>
</dbReference>
<dbReference type="GO" id="GO:0004634">
    <property type="term" value="F:phosphopyruvate hydratase activity"/>
    <property type="evidence" value="ECO:0007669"/>
    <property type="project" value="UniProtKB-UniRule"/>
</dbReference>
<dbReference type="GO" id="GO:0006096">
    <property type="term" value="P:glycolytic process"/>
    <property type="evidence" value="ECO:0007669"/>
    <property type="project" value="UniProtKB-UniRule"/>
</dbReference>
<dbReference type="CDD" id="cd03313">
    <property type="entry name" value="enolase"/>
    <property type="match status" value="1"/>
</dbReference>
<dbReference type="Gene3D" id="3.20.20.120">
    <property type="entry name" value="Enolase-like C-terminal domain"/>
    <property type="match status" value="1"/>
</dbReference>
<dbReference type="Gene3D" id="3.30.390.10">
    <property type="entry name" value="Enolase-like, N-terminal domain"/>
    <property type="match status" value="1"/>
</dbReference>
<dbReference type="HAMAP" id="MF_00318">
    <property type="entry name" value="Enolase"/>
    <property type="match status" value="1"/>
</dbReference>
<dbReference type="InterPro" id="IPR000941">
    <property type="entry name" value="Enolase"/>
</dbReference>
<dbReference type="InterPro" id="IPR036849">
    <property type="entry name" value="Enolase-like_C_sf"/>
</dbReference>
<dbReference type="InterPro" id="IPR029017">
    <property type="entry name" value="Enolase-like_N"/>
</dbReference>
<dbReference type="InterPro" id="IPR020810">
    <property type="entry name" value="Enolase_C"/>
</dbReference>
<dbReference type="InterPro" id="IPR020809">
    <property type="entry name" value="Enolase_CS"/>
</dbReference>
<dbReference type="InterPro" id="IPR020811">
    <property type="entry name" value="Enolase_N"/>
</dbReference>
<dbReference type="NCBIfam" id="TIGR01060">
    <property type="entry name" value="eno"/>
    <property type="match status" value="1"/>
</dbReference>
<dbReference type="PANTHER" id="PTHR11902">
    <property type="entry name" value="ENOLASE"/>
    <property type="match status" value="1"/>
</dbReference>
<dbReference type="PANTHER" id="PTHR11902:SF1">
    <property type="entry name" value="ENOLASE"/>
    <property type="match status" value="1"/>
</dbReference>
<dbReference type="Pfam" id="PF00113">
    <property type="entry name" value="Enolase_C"/>
    <property type="match status" value="1"/>
</dbReference>
<dbReference type="Pfam" id="PF03952">
    <property type="entry name" value="Enolase_N"/>
    <property type="match status" value="1"/>
</dbReference>
<dbReference type="PIRSF" id="PIRSF001400">
    <property type="entry name" value="Enolase"/>
    <property type="match status" value="1"/>
</dbReference>
<dbReference type="PRINTS" id="PR00148">
    <property type="entry name" value="ENOLASE"/>
</dbReference>
<dbReference type="SFLD" id="SFLDS00001">
    <property type="entry name" value="Enolase"/>
    <property type="match status" value="1"/>
</dbReference>
<dbReference type="SFLD" id="SFLDF00002">
    <property type="entry name" value="enolase"/>
    <property type="match status" value="1"/>
</dbReference>
<dbReference type="SMART" id="SM01192">
    <property type="entry name" value="Enolase_C"/>
    <property type="match status" value="1"/>
</dbReference>
<dbReference type="SMART" id="SM01193">
    <property type="entry name" value="Enolase_N"/>
    <property type="match status" value="1"/>
</dbReference>
<dbReference type="SUPFAM" id="SSF51604">
    <property type="entry name" value="Enolase C-terminal domain-like"/>
    <property type="match status" value="1"/>
</dbReference>
<dbReference type="SUPFAM" id="SSF54826">
    <property type="entry name" value="Enolase N-terminal domain-like"/>
    <property type="match status" value="1"/>
</dbReference>
<dbReference type="PROSITE" id="PS00164">
    <property type="entry name" value="ENOLASE"/>
    <property type="match status" value="1"/>
</dbReference>
<proteinExistence type="inferred from homology"/>
<organism>
    <name type="scientific">Aliarcobacter butzleri (strain RM4018)</name>
    <name type="common">Arcobacter butzleri</name>
    <dbReference type="NCBI Taxonomy" id="367737"/>
    <lineage>
        <taxon>Bacteria</taxon>
        <taxon>Pseudomonadati</taxon>
        <taxon>Campylobacterota</taxon>
        <taxon>Epsilonproteobacteria</taxon>
        <taxon>Campylobacterales</taxon>
        <taxon>Arcobacteraceae</taxon>
        <taxon>Aliarcobacter</taxon>
    </lineage>
</organism>
<name>ENO_ALIB4</name>